<keyword id="KW-0067">ATP-binding</keyword>
<keyword id="KW-0963">Cytoplasm</keyword>
<keyword id="KW-0418">Kinase</keyword>
<keyword id="KW-0479">Metal-binding</keyword>
<keyword id="KW-0545">Nucleotide biosynthesis</keyword>
<keyword id="KW-0547">Nucleotide-binding</keyword>
<keyword id="KW-1185">Reference proteome</keyword>
<keyword id="KW-0808">Transferase</keyword>
<keyword id="KW-0862">Zinc</keyword>
<dbReference type="EC" id="2.7.4.3" evidence="1"/>
<dbReference type="EMBL" id="CP000029">
    <property type="protein sequence ID" value="AAW55126.1"/>
    <property type="molecule type" value="Genomic_DNA"/>
</dbReference>
<dbReference type="RefSeq" id="WP_001829774.1">
    <property type="nucleotide sequence ID" value="NC_002976.3"/>
</dbReference>
<dbReference type="SMR" id="Q5HM20"/>
<dbReference type="STRING" id="176279.SERP1810"/>
<dbReference type="KEGG" id="ser:SERP1810"/>
<dbReference type="eggNOG" id="COG0563">
    <property type="taxonomic scope" value="Bacteria"/>
</dbReference>
<dbReference type="HOGENOM" id="CLU_032354_1_2_9"/>
<dbReference type="UniPathway" id="UPA00588">
    <property type="reaction ID" value="UER00649"/>
</dbReference>
<dbReference type="Proteomes" id="UP000000531">
    <property type="component" value="Chromosome"/>
</dbReference>
<dbReference type="GO" id="GO:0005737">
    <property type="term" value="C:cytoplasm"/>
    <property type="evidence" value="ECO:0007669"/>
    <property type="project" value="UniProtKB-SubCell"/>
</dbReference>
<dbReference type="GO" id="GO:0004017">
    <property type="term" value="F:adenylate kinase activity"/>
    <property type="evidence" value="ECO:0007669"/>
    <property type="project" value="UniProtKB-UniRule"/>
</dbReference>
<dbReference type="GO" id="GO:0005524">
    <property type="term" value="F:ATP binding"/>
    <property type="evidence" value="ECO:0007669"/>
    <property type="project" value="UniProtKB-UniRule"/>
</dbReference>
<dbReference type="GO" id="GO:0008270">
    <property type="term" value="F:zinc ion binding"/>
    <property type="evidence" value="ECO:0007669"/>
    <property type="project" value="UniProtKB-UniRule"/>
</dbReference>
<dbReference type="GO" id="GO:0044209">
    <property type="term" value="P:AMP salvage"/>
    <property type="evidence" value="ECO:0007669"/>
    <property type="project" value="UniProtKB-UniRule"/>
</dbReference>
<dbReference type="CDD" id="cd01428">
    <property type="entry name" value="ADK"/>
    <property type="match status" value="1"/>
</dbReference>
<dbReference type="FunFam" id="3.40.50.300:FF:000106">
    <property type="entry name" value="Adenylate kinase mitochondrial"/>
    <property type="match status" value="1"/>
</dbReference>
<dbReference type="Gene3D" id="3.40.50.300">
    <property type="entry name" value="P-loop containing nucleotide triphosphate hydrolases"/>
    <property type="match status" value="1"/>
</dbReference>
<dbReference type="HAMAP" id="MF_00235">
    <property type="entry name" value="Adenylate_kinase_Adk"/>
    <property type="match status" value="1"/>
</dbReference>
<dbReference type="InterPro" id="IPR006259">
    <property type="entry name" value="Adenyl_kin_sub"/>
</dbReference>
<dbReference type="InterPro" id="IPR000850">
    <property type="entry name" value="Adenylat/UMP-CMP_kin"/>
</dbReference>
<dbReference type="InterPro" id="IPR033690">
    <property type="entry name" value="Adenylat_kinase_CS"/>
</dbReference>
<dbReference type="InterPro" id="IPR007862">
    <property type="entry name" value="Adenylate_kinase_lid-dom"/>
</dbReference>
<dbReference type="InterPro" id="IPR008144">
    <property type="entry name" value="Guanylate_kin-like_dom"/>
</dbReference>
<dbReference type="InterPro" id="IPR027417">
    <property type="entry name" value="P-loop_NTPase"/>
</dbReference>
<dbReference type="NCBIfam" id="TIGR01351">
    <property type="entry name" value="adk"/>
    <property type="match status" value="1"/>
</dbReference>
<dbReference type="NCBIfam" id="NF001380">
    <property type="entry name" value="PRK00279.1-2"/>
    <property type="match status" value="1"/>
</dbReference>
<dbReference type="NCBIfam" id="NF001381">
    <property type="entry name" value="PRK00279.1-3"/>
    <property type="match status" value="1"/>
</dbReference>
<dbReference type="NCBIfam" id="NF011100">
    <property type="entry name" value="PRK14527.1"/>
    <property type="match status" value="1"/>
</dbReference>
<dbReference type="PANTHER" id="PTHR23359">
    <property type="entry name" value="NUCLEOTIDE KINASE"/>
    <property type="match status" value="1"/>
</dbReference>
<dbReference type="Pfam" id="PF00406">
    <property type="entry name" value="ADK"/>
    <property type="match status" value="1"/>
</dbReference>
<dbReference type="Pfam" id="PF05191">
    <property type="entry name" value="ADK_lid"/>
    <property type="match status" value="1"/>
</dbReference>
<dbReference type="PRINTS" id="PR00094">
    <property type="entry name" value="ADENYLTKNASE"/>
</dbReference>
<dbReference type="SUPFAM" id="SSF52540">
    <property type="entry name" value="P-loop containing nucleoside triphosphate hydrolases"/>
    <property type="match status" value="1"/>
</dbReference>
<dbReference type="PROSITE" id="PS00113">
    <property type="entry name" value="ADENYLATE_KINASE"/>
    <property type="match status" value="1"/>
</dbReference>
<proteinExistence type="inferred from homology"/>
<gene>
    <name evidence="1" type="primary">adk</name>
    <name type="ordered locus">SERP1810</name>
</gene>
<sequence length="215" mass="24022">MNIILMGLPGAGKGTQASEIVKKFPIPHISTGDMFRKAIKDETDLGKEAKSYMDRGELVPDEVTVGIVKERISEDDAKKGFLLDGFPRTIDQAESLSQIMSELDREIDAVINIEVPEEELMNRLTGRRICEKCGTTYHLVFNPPKVDGICDIDGGKLYQREDDNPETVSNRLSVNVKQSKPILEYYNNKGVLKNIDGSKDIDEVTNDVIDILDHL</sequence>
<protein>
    <recommendedName>
        <fullName evidence="1">Adenylate kinase</fullName>
        <shortName evidence="1">AK</shortName>
        <ecNumber evidence="1">2.7.4.3</ecNumber>
    </recommendedName>
    <alternativeName>
        <fullName evidence="1">ATP-AMP transphosphorylase</fullName>
    </alternativeName>
    <alternativeName>
        <fullName evidence="1">ATP:AMP phosphotransferase</fullName>
    </alternativeName>
    <alternativeName>
        <fullName evidence="1">Adenylate monophosphate kinase</fullName>
    </alternativeName>
</protein>
<feature type="chain" id="PRO_0000158852" description="Adenylate kinase">
    <location>
        <begin position="1"/>
        <end position="215"/>
    </location>
</feature>
<feature type="region of interest" description="NMP" evidence="1">
    <location>
        <begin position="30"/>
        <end position="59"/>
    </location>
</feature>
<feature type="region of interest" description="LID" evidence="1">
    <location>
        <begin position="126"/>
        <end position="163"/>
    </location>
</feature>
<feature type="binding site" evidence="1">
    <location>
        <begin position="10"/>
        <end position="15"/>
    </location>
    <ligand>
        <name>ATP</name>
        <dbReference type="ChEBI" id="CHEBI:30616"/>
    </ligand>
</feature>
<feature type="binding site" evidence="1">
    <location>
        <position position="31"/>
    </location>
    <ligand>
        <name>AMP</name>
        <dbReference type="ChEBI" id="CHEBI:456215"/>
    </ligand>
</feature>
<feature type="binding site" evidence="1">
    <location>
        <position position="36"/>
    </location>
    <ligand>
        <name>AMP</name>
        <dbReference type="ChEBI" id="CHEBI:456215"/>
    </ligand>
</feature>
<feature type="binding site" evidence="1">
    <location>
        <begin position="57"/>
        <end position="59"/>
    </location>
    <ligand>
        <name>AMP</name>
        <dbReference type="ChEBI" id="CHEBI:456215"/>
    </ligand>
</feature>
<feature type="binding site" evidence="1">
    <location>
        <begin position="85"/>
        <end position="88"/>
    </location>
    <ligand>
        <name>AMP</name>
        <dbReference type="ChEBI" id="CHEBI:456215"/>
    </ligand>
</feature>
<feature type="binding site" evidence="1">
    <location>
        <position position="92"/>
    </location>
    <ligand>
        <name>AMP</name>
        <dbReference type="ChEBI" id="CHEBI:456215"/>
    </ligand>
</feature>
<feature type="binding site" evidence="1">
    <location>
        <position position="127"/>
    </location>
    <ligand>
        <name>ATP</name>
        <dbReference type="ChEBI" id="CHEBI:30616"/>
    </ligand>
</feature>
<feature type="binding site" evidence="1">
    <location>
        <position position="130"/>
    </location>
    <ligand>
        <name>Zn(2+)</name>
        <dbReference type="ChEBI" id="CHEBI:29105"/>
        <note>structural</note>
    </ligand>
</feature>
<feature type="binding site" evidence="1">
    <location>
        <position position="133"/>
    </location>
    <ligand>
        <name>Zn(2+)</name>
        <dbReference type="ChEBI" id="CHEBI:29105"/>
        <note>structural</note>
    </ligand>
</feature>
<feature type="binding site" evidence="1">
    <location>
        <begin position="136"/>
        <end position="137"/>
    </location>
    <ligand>
        <name>ATP</name>
        <dbReference type="ChEBI" id="CHEBI:30616"/>
    </ligand>
</feature>
<feature type="binding site" evidence="1">
    <location>
        <position position="150"/>
    </location>
    <ligand>
        <name>Zn(2+)</name>
        <dbReference type="ChEBI" id="CHEBI:29105"/>
        <note>structural</note>
    </ligand>
</feature>
<feature type="binding site" evidence="1">
    <location>
        <position position="153"/>
    </location>
    <ligand>
        <name>Zn(2+)</name>
        <dbReference type="ChEBI" id="CHEBI:29105"/>
        <note>structural</note>
    </ligand>
</feature>
<feature type="binding site" evidence="1">
    <location>
        <position position="160"/>
    </location>
    <ligand>
        <name>AMP</name>
        <dbReference type="ChEBI" id="CHEBI:456215"/>
    </ligand>
</feature>
<feature type="binding site" evidence="1">
    <location>
        <position position="171"/>
    </location>
    <ligand>
        <name>AMP</name>
        <dbReference type="ChEBI" id="CHEBI:456215"/>
    </ligand>
</feature>
<feature type="binding site" evidence="1">
    <location>
        <position position="199"/>
    </location>
    <ligand>
        <name>ATP</name>
        <dbReference type="ChEBI" id="CHEBI:30616"/>
    </ligand>
</feature>
<organism>
    <name type="scientific">Staphylococcus epidermidis (strain ATCC 35984 / DSM 28319 / BCRC 17069 / CCUG 31568 / BM 3577 / RP62A)</name>
    <dbReference type="NCBI Taxonomy" id="176279"/>
    <lineage>
        <taxon>Bacteria</taxon>
        <taxon>Bacillati</taxon>
        <taxon>Bacillota</taxon>
        <taxon>Bacilli</taxon>
        <taxon>Bacillales</taxon>
        <taxon>Staphylococcaceae</taxon>
        <taxon>Staphylococcus</taxon>
    </lineage>
</organism>
<name>KAD_STAEQ</name>
<evidence type="ECO:0000255" key="1">
    <source>
        <dbReference type="HAMAP-Rule" id="MF_00235"/>
    </source>
</evidence>
<accession>Q5HM20</accession>
<reference key="1">
    <citation type="journal article" date="2005" name="J. Bacteriol.">
        <title>Insights on evolution of virulence and resistance from the complete genome analysis of an early methicillin-resistant Staphylococcus aureus strain and a biofilm-producing methicillin-resistant Staphylococcus epidermidis strain.</title>
        <authorList>
            <person name="Gill S.R."/>
            <person name="Fouts D.E."/>
            <person name="Archer G.L."/>
            <person name="Mongodin E.F."/>
            <person name="DeBoy R.T."/>
            <person name="Ravel J."/>
            <person name="Paulsen I.T."/>
            <person name="Kolonay J.F."/>
            <person name="Brinkac L.M."/>
            <person name="Beanan M.J."/>
            <person name="Dodson R.J."/>
            <person name="Daugherty S.C."/>
            <person name="Madupu R."/>
            <person name="Angiuoli S.V."/>
            <person name="Durkin A.S."/>
            <person name="Haft D.H."/>
            <person name="Vamathevan J.J."/>
            <person name="Khouri H."/>
            <person name="Utterback T.R."/>
            <person name="Lee C."/>
            <person name="Dimitrov G."/>
            <person name="Jiang L."/>
            <person name="Qin H."/>
            <person name="Weidman J."/>
            <person name="Tran K."/>
            <person name="Kang K.H."/>
            <person name="Hance I.R."/>
            <person name="Nelson K.E."/>
            <person name="Fraser C.M."/>
        </authorList>
    </citation>
    <scope>NUCLEOTIDE SEQUENCE [LARGE SCALE GENOMIC DNA]</scope>
    <source>
        <strain>ATCC 35984 / DSM 28319 / BCRC 17069 / CCUG 31568 / BM 3577 / RP62A</strain>
    </source>
</reference>
<comment type="function">
    <text evidence="1">Catalyzes the reversible transfer of the terminal phosphate group between ATP and AMP. Plays an important role in cellular energy homeostasis and in adenine nucleotide metabolism.</text>
</comment>
<comment type="catalytic activity">
    <reaction evidence="1">
        <text>AMP + ATP = 2 ADP</text>
        <dbReference type="Rhea" id="RHEA:12973"/>
        <dbReference type="ChEBI" id="CHEBI:30616"/>
        <dbReference type="ChEBI" id="CHEBI:456215"/>
        <dbReference type="ChEBI" id="CHEBI:456216"/>
        <dbReference type="EC" id="2.7.4.3"/>
    </reaction>
</comment>
<comment type="pathway">
    <text evidence="1">Purine metabolism; AMP biosynthesis via salvage pathway; AMP from ADP: step 1/1.</text>
</comment>
<comment type="subunit">
    <text evidence="1">Monomer.</text>
</comment>
<comment type="subcellular location">
    <subcellularLocation>
        <location evidence="1">Cytoplasm</location>
    </subcellularLocation>
</comment>
<comment type="domain">
    <text evidence="1">Consists of three domains, a large central CORE domain and two small peripheral domains, NMPbind and LID, which undergo movements during catalysis. The LID domain closes over the site of phosphoryl transfer upon ATP binding. Assembling and dissambling the active center during each catalytic cycle provides an effective means to prevent ATP hydrolysis. Some bacteria have evolved a zinc-coordinating structure that stabilizes the LID domain.</text>
</comment>
<comment type="similarity">
    <text evidence="1">Belongs to the adenylate kinase family.</text>
</comment>